<feature type="chain" id="PRO_0000160405" description="ATP-dependent Clp protease ATP-binding subunit ClpX">
    <location>
        <begin position="1"/>
        <end position="442"/>
    </location>
</feature>
<feature type="domain" description="ClpX-type ZB" evidence="2">
    <location>
        <begin position="19"/>
        <end position="72"/>
    </location>
</feature>
<feature type="binding site" evidence="2">
    <location>
        <position position="31"/>
    </location>
    <ligand>
        <name>Zn(2+)</name>
        <dbReference type="ChEBI" id="CHEBI:29105"/>
    </ligand>
</feature>
<feature type="binding site" evidence="2">
    <location>
        <position position="34"/>
    </location>
    <ligand>
        <name>Zn(2+)</name>
        <dbReference type="ChEBI" id="CHEBI:29105"/>
    </ligand>
</feature>
<feature type="binding site" evidence="2">
    <location>
        <position position="53"/>
    </location>
    <ligand>
        <name>Zn(2+)</name>
        <dbReference type="ChEBI" id="CHEBI:29105"/>
    </ligand>
</feature>
<feature type="binding site" evidence="2">
    <location>
        <position position="56"/>
    </location>
    <ligand>
        <name>Zn(2+)</name>
        <dbReference type="ChEBI" id="CHEBI:29105"/>
    </ligand>
</feature>
<feature type="binding site" evidence="1">
    <location>
        <begin position="137"/>
        <end position="144"/>
    </location>
    <ligand>
        <name>ATP</name>
        <dbReference type="ChEBI" id="CHEBI:30616"/>
    </ligand>
</feature>
<dbReference type="EMBL" id="AE015451">
    <property type="protein sequence ID" value="AAN67914.1"/>
    <property type="molecule type" value="Genomic_DNA"/>
</dbReference>
<dbReference type="RefSeq" id="NP_744450.1">
    <property type="nucleotide sequence ID" value="NC_002947.4"/>
</dbReference>
<dbReference type="SMR" id="Q88KI9"/>
<dbReference type="STRING" id="160488.PP_2301"/>
<dbReference type="PaxDb" id="160488-PP_2301"/>
<dbReference type="KEGG" id="ppu:PP_2301"/>
<dbReference type="PATRIC" id="fig|160488.4.peg.2438"/>
<dbReference type="eggNOG" id="COG1219">
    <property type="taxonomic scope" value="Bacteria"/>
</dbReference>
<dbReference type="HOGENOM" id="CLU_014218_8_2_6"/>
<dbReference type="OrthoDB" id="9804062at2"/>
<dbReference type="PhylomeDB" id="Q88KI9"/>
<dbReference type="BioCyc" id="PPUT160488:G1G01-2462-MONOMER"/>
<dbReference type="Proteomes" id="UP000000556">
    <property type="component" value="Chromosome"/>
</dbReference>
<dbReference type="GO" id="GO:0009376">
    <property type="term" value="C:HslUV protease complex"/>
    <property type="evidence" value="ECO:0007669"/>
    <property type="project" value="TreeGrafter"/>
</dbReference>
<dbReference type="GO" id="GO:0005524">
    <property type="term" value="F:ATP binding"/>
    <property type="evidence" value="ECO:0007669"/>
    <property type="project" value="UniProtKB-UniRule"/>
</dbReference>
<dbReference type="GO" id="GO:0016887">
    <property type="term" value="F:ATP hydrolysis activity"/>
    <property type="evidence" value="ECO:0007669"/>
    <property type="project" value="InterPro"/>
</dbReference>
<dbReference type="GO" id="GO:0140662">
    <property type="term" value="F:ATP-dependent protein folding chaperone"/>
    <property type="evidence" value="ECO:0007669"/>
    <property type="project" value="InterPro"/>
</dbReference>
<dbReference type="GO" id="GO:0046983">
    <property type="term" value="F:protein dimerization activity"/>
    <property type="evidence" value="ECO:0007669"/>
    <property type="project" value="InterPro"/>
</dbReference>
<dbReference type="GO" id="GO:0051082">
    <property type="term" value="F:unfolded protein binding"/>
    <property type="evidence" value="ECO:0007669"/>
    <property type="project" value="UniProtKB-UniRule"/>
</dbReference>
<dbReference type="GO" id="GO:0008270">
    <property type="term" value="F:zinc ion binding"/>
    <property type="evidence" value="ECO:0007669"/>
    <property type="project" value="InterPro"/>
</dbReference>
<dbReference type="GO" id="GO:0051301">
    <property type="term" value="P:cell division"/>
    <property type="evidence" value="ECO:0007669"/>
    <property type="project" value="TreeGrafter"/>
</dbReference>
<dbReference type="GO" id="GO:0051603">
    <property type="term" value="P:proteolysis involved in protein catabolic process"/>
    <property type="evidence" value="ECO:0007669"/>
    <property type="project" value="TreeGrafter"/>
</dbReference>
<dbReference type="CDD" id="cd19497">
    <property type="entry name" value="RecA-like_ClpX"/>
    <property type="match status" value="1"/>
</dbReference>
<dbReference type="FunFam" id="1.10.8.60:FF:000002">
    <property type="entry name" value="ATP-dependent Clp protease ATP-binding subunit ClpX"/>
    <property type="match status" value="1"/>
</dbReference>
<dbReference type="FunFam" id="3.40.50.300:FF:000005">
    <property type="entry name" value="ATP-dependent Clp protease ATP-binding subunit ClpX"/>
    <property type="match status" value="1"/>
</dbReference>
<dbReference type="Gene3D" id="1.10.8.60">
    <property type="match status" value="1"/>
</dbReference>
<dbReference type="Gene3D" id="6.20.220.10">
    <property type="entry name" value="ClpX chaperone, C4-type zinc finger domain"/>
    <property type="match status" value="1"/>
</dbReference>
<dbReference type="Gene3D" id="3.40.50.300">
    <property type="entry name" value="P-loop containing nucleotide triphosphate hydrolases"/>
    <property type="match status" value="1"/>
</dbReference>
<dbReference type="HAMAP" id="MF_00175">
    <property type="entry name" value="ClpX"/>
    <property type="match status" value="1"/>
</dbReference>
<dbReference type="InterPro" id="IPR003593">
    <property type="entry name" value="AAA+_ATPase"/>
</dbReference>
<dbReference type="InterPro" id="IPR050052">
    <property type="entry name" value="ATP-dep_Clp_protease_ClpX"/>
</dbReference>
<dbReference type="InterPro" id="IPR003959">
    <property type="entry name" value="ATPase_AAA_core"/>
</dbReference>
<dbReference type="InterPro" id="IPR019489">
    <property type="entry name" value="Clp_ATPase_C"/>
</dbReference>
<dbReference type="InterPro" id="IPR004487">
    <property type="entry name" value="Clp_protease_ATP-bd_su_ClpX"/>
</dbReference>
<dbReference type="InterPro" id="IPR046425">
    <property type="entry name" value="ClpX_bact"/>
</dbReference>
<dbReference type="InterPro" id="IPR027417">
    <property type="entry name" value="P-loop_NTPase"/>
</dbReference>
<dbReference type="InterPro" id="IPR010603">
    <property type="entry name" value="Znf_CppX_C4"/>
</dbReference>
<dbReference type="InterPro" id="IPR038366">
    <property type="entry name" value="Znf_CppX_C4_sf"/>
</dbReference>
<dbReference type="NCBIfam" id="TIGR00382">
    <property type="entry name" value="clpX"/>
    <property type="match status" value="1"/>
</dbReference>
<dbReference type="NCBIfam" id="NF003745">
    <property type="entry name" value="PRK05342.1"/>
    <property type="match status" value="1"/>
</dbReference>
<dbReference type="PANTHER" id="PTHR48102:SF7">
    <property type="entry name" value="ATP-DEPENDENT CLP PROTEASE ATP-BINDING SUBUNIT CLPX-LIKE, MITOCHONDRIAL"/>
    <property type="match status" value="1"/>
</dbReference>
<dbReference type="PANTHER" id="PTHR48102">
    <property type="entry name" value="ATP-DEPENDENT CLP PROTEASE ATP-BINDING SUBUNIT CLPX-LIKE, MITOCHONDRIAL-RELATED"/>
    <property type="match status" value="1"/>
</dbReference>
<dbReference type="Pfam" id="PF07724">
    <property type="entry name" value="AAA_2"/>
    <property type="match status" value="1"/>
</dbReference>
<dbReference type="Pfam" id="PF10431">
    <property type="entry name" value="ClpB_D2-small"/>
    <property type="match status" value="1"/>
</dbReference>
<dbReference type="Pfam" id="PF06689">
    <property type="entry name" value="zf-C4_ClpX"/>
    <property type="match status" value="1"/>
</dbReference>
<dbReference type="SMART" id="SM00382">
    <property type="entry name" value="AAA"/>
    <property type="match status" value="1"/>
</dbReference>
<dbReference type="SMART" id="SM01086">
    <property type="entry name" value="ClpB_D2-small"/>
    <property type="match status" value="1"/>
</dbReference>
<dbReference type="SMART" id="SM00994">
    <property type="entry name" value="zf-C4_ClpX"/>
    <property type="match status" value="1"/>
</dbReference>
<dbReference type="SUPFAM" id="SSF57716">
    <property type="entry name" value="Glucocorticoid receptor-like (DNA-binding domain)"/>
    <property type="match status" value="1"/>
</dbReference>
<dbReference type="SUPFAM" id="SSF52540">
    <property type="entry name" value="P-loop containing nucleoside triphosphate hydrolases"/>
    <property type="match status" value="1"/>
</dbReference>
<dbReference type="PROSITE" id="PS51902">
    <property type="entry name" value="CLPX_ZB"/>
    <property type="match status" value="1"/>
</dbReference>
<reference key="1">
    <citation type="journal article" date="2002" name="Environ. Microbiol.">
        <title>Complete genome sequence and comparative analysis of the metabolically versatile Pseudomonas putida KT2440.</title>
        <authorList>
            <person name="Nelson K.E."/>
            <person name="Weinel C."/>
            <person name="Paulsen I.T."/>
            <person name="Dodson R.J."/>
            <person name="Hilbert H."/>
            <person name="Martins dos Santos V.A.P."/>
            <person name="Fouts D.E."/>
            <person name="Gill S.R."/>
            <person name="Pop M."/>
            <person name="Holmes M."/>
            <person name="Brinkac L.M."/>
            <person name="Beanan M.J."/>
            <person name="DeBoy R.T."/>
            <person name="Daugherty S.C."/>
            <person name="Kolonay J.F."/>
            <person name="Madupu R."/>
            <person name="Nelson W.C."/>
            <person name="White O."/>
            <person name="Peterson J.D."/>
            <person name="Khouri H.M."/>
            <person name="Hance I."/>
            <person name="Chris Lee P."/>
            <person name="Holtzapple E.K."/>
            <person name="Scanlan D."/>
            <person name="Tran K."/>
            <person name="Moazzez A."/>
            <person name="Utterback T.R."/>
            <person name="Rizzo M."/>
            <person name="Lee K."/>
            <person name="Kosack D."/>
            <person name="Moestl D."/>
            <person name="Wedler H."/>
            <person name="Lauber J."/>
            <person name="Stjepandic D."/>
            <person name="Hoheisel J."/>
            <person name="Straetz M."/>
            <person name="Heim S."/>
            <person name="Kiewitz C."/>
            <person name="Eisen J.A."/>
            <person name="Timmis K.N."/>
            <person name="Duesterhoeft A."/>
            <person name="Tuemmler B."/>
            <person name="Fraser C.M."/>
        </authorList>
    </citation>
    <scope>NUCLEOTIDE SEQUENCE [LARGE SCALE GENOMIC DNA]</scope>
    <source>
        <strain>ATCC 47054 / DSM 6125 / CFBP 8728 / NCIMB 11950 / KT2440</strain>
    </source>
</reference>
<proteinExistence type="inferred from homology"/>
<keyword id="KW-0067">ATP-binding</keyword>
<keyword id="KW-0143">Chaperone</keyword>
<keyword id="KW-0479">Metal-binding</keyword>
<keyword id="KW-0547">Nucleotide-binding</keyword>
<keyword id="KW-1185">Reference proteome</keyword>
<keyword id="KW-0862">Zinc</keyword>
<gene>
    <name evidence="1" type="primary">clpX</name>
    <name type="ordered locus">PP_2301</name>
</gene>
<accession>Q88KI9</accession>
<organism>
    <name type="scientific">Pseudomonas putida (strain ATCC 47054 / DSM 6125 / CFBP 8728 / NCIMB 11950 / KT2440)</name>
    <dbReference type="NCBI Taxonomy" id="160488"/>
    <lineage>
        <taxon>Bacteria</taxon>
        <taxon>Pseudomonadati</taxon>
        <taxon>Pseudomonadota</taxon>
        <taxon>Gammaproteobacteria</taxon>
        <taxon>Pseudomonadales</taxon>
        <taxon>Pseudomonadaceae</taxon>
        <taxon>Pseudomonas</taxon>
    </lineage>
</organism>
<protein>
    <recommendedName>
        <fullName evidence="1">ATP-dependent Clp protease ATP-binding subunit ClpX</fullName>
    </recommendedName>
</protein>
<evidence type="ECO:0000255" key="1">
    <source>
        <dbReference type="HAMAP-Rule" id="MF_00175"/>
    </source>
</evidence>
<evidence type="ECO:0000255" key="2">
    <source>
        <dbReference type="PROSITE-ProRule" id="PRU01250"/>
    </source>
</evidence>
<comment type="function">
    <text evidence="1">ATP-dependent specificity component of the Clp protease. It directs the protease to specific substrates. Can perform chaperone functions in the absence of ClpP.</text>
</comment>
<comment type="subunit">
    <text evidence="1">Component of the ClpX-ClpP complex. Forms a hexameric ring that, in the presence of ATP, binds to fourteen ClpP subunits assembled into a disk-like structure with a central cavity, resembling the structure of eukaryotic proteasomes.</text>
</comment>
<comment type="similarity">
    <text evidence="1">Belongs to the ClpX chaperone family.</text>
</comment>
<name>CLPX_PSEPK</name>
<sequence length="442" mass="48526">MPSSCVASLPDWIDRMTDTRNGEDSGKLLYCSFCGKSQHEVRKLIAGPSVFICDECVDLCNDIIREEVQEAQAESSAHKLPSPKEISGILDQYVIGQERAKKVLAVAVYNHYKRLNQRDKKGDEVELGKSNILLIGPTGSGKTLLAETLARLLNVPFTIADATTLTEAGYVGEDVENIIQKLLQKCDYDVEKAQMGIVYIDEIDKISRKSDNPSITRDVSGEGVQQALLKLIEGTVASVPPQGGRKHPQQEFLQVDTRNILFICGGAFSGLEKVIQNRSTKGGIGFGAEVRSKEEGKKVGESLREVEPDDLVKFGLIPEFVGRLPVLATLDELDEAALMQILTEPKNALTKQYAKLFEMESVDLEFRSDALKAVARKALERKTGARGLRSILEGVLLDTMYEIPSKKDVSKVVIDESVIEGTSQPLMIYENSEPQAKAAPDA</sequence>